<evidence type="ECO:0000255" key="1">
    <source>
        <dbReference type="HAMAP-Rule" id="MF_01821"/>
    </source>
</evidence>
<organism>
    <name type="scientific">Vibrio vulnificus (strain YJ016)</name>
    <dbReference type="NCBI Taxonomy" id="196600"/>
    <lineage>
        <taxon>Bacteria</taxon>
        <taxon>Pseudomonadati</taxon>
        <taxon>Pseudomonadota</taxon>
        <taxon>Gammaproteobacteria</taxon>
        <taxon>Vibrionales</taxon>
        <taxon>Vibrionaceae</taxon>
        <taxon>Vibrio</taxon>
    </lineage>
</organism>
<reference key="1">
    <citation type="journal article" date="2003" name="Genome Res.">
        <title>Comparative genome analysis of Vibrio vulnificus, a marine pathogen.</title>
        <authorList>
            <person name="Chen C.-Y."/>
            <person name="Wu K.-M."/>
            <person name="Chang Y.-C."/>
            <person name="Chang C.-H."/>
            <person name="Tsai H.-C."/>
            <person name="Liao T.-L."/>
            <person name="Liu Y.-M."/>
            <person name="Chen H.-J."/>
            <person name="Shen A.B.-T."/>
            <person name="Li J.-C."/>
            <person name="Su T.-L."/>
            <person name="Shao C.-P."/>
            <person name="Lee C.-T."/>
            <person name="Hor L.-I."/>
            <person name="Tsai S.-F."/>
        </authorList>
    </citation>
    <scope>NUCLEOTIDE SEQUENCE [LARGE SCALE GENOMIC DNA]</scope>
    <source>
        <strain>YJ016</strain>
    </source>
</reference>
<name>RAPA_VIBVY</name>
<gene>
    <name evidence="1" type="primary">rapA</name>
    <name type="synonym">hepA</name>
    <name type="ordered locus">VV2925</name>
</gene>
<dbReference type="EC" id="3.6.4.-" evidence="1"/>
<dbReference type="EMBL" id="BA000037">
    <property type="protein sequence ID" value="BAC95689.1"/>
    <property type="molecule type" value="Genomic_DNA"/>
</dbReference>
<dbReference type="RefSeq" id="WP_011151234.1">
    <property type="nucleotide sequence ID" value="NC_005139.1"/>
</dbReference>
<dbReference type="SMR" id="Q7MHE6"/>
<dbReference type="STRING" id="672.VV93_v1c26480"/>
<dbReference type="KEGG" id="vvy:VV2925"/>
<dbReference type="PATRIC" id="fig|196600.6.peg.2906"/>
<dbReference type="eggNOG" id="COG0553">
    <property type="taxonomic scope" value="Bacteria"/>
</dbReference>
<dbReference type="HOGENOM" id="CLU_011520_0_0_6"/>
<dbReference type="Proteomes" id="UP000002675">
    <property type="component" value="Chromosome I"/>
</dbReference>
<dbReference type="GO" id="GO:0005524">
    <property type="term" value="F:ATP binding"/>
    <property type="evidence" value="ECO:0007669"/>
    <property type="project" value="UniProtKB-UniRule"/>
</dbReference>
<dbReference type="GO" id="GO:0003677">
    <property type="term" value="F:DNA binding"/>
    <property type="evidence" value="ECO:0007669"/>
    <property type="project" value="UniProtKB-KW"/>
</dbReference>
<dbReference type="GO" id="GO:0004386">
    <property type="term" value="F:helicase activity"/>
    <property type="evidence" value="ECO:0007669"/>
    <property type="project" value="UniProtKB-UniRule"/>
</dbReference>
<dbReference type="GO" id="GO:0016817">
    <property type="term" value="F:hydrolase activity, acting on acid anhydrides"/>
    <property type="evidence" value="ECO:0007669"/>
    <property type="project" value="InterPro"/>
</dbReference>
<dbReference type="GO" id="GO:0006355">
    <property type="term" value="P:regulation of DNA-templated transcription"/>
    <property type="evidence" value="ECO:0007669"/>
    <property type="project" value="UniProtKB-UniRule"/>
</dbReference>
<dbReference type="CDD" id="cd18011">
    <property type="entry name" value="DEXDc_RapA"/>
    <property type="match status" value="1"/>
</dbReference>
<dbReference type="CDD" id="cd18793">
    <property type="entry name" value="SF2_C_SNF"/>
    <property type="match status" value="1"/>
</dbReference>
<dbReference type="Gene3D" id="2.30.30.140">
    <property type="match status" value="1"/>
</dbReference>
<dbReference type="Gene3D" id="2.30.30.930">
    <property type="match status" value="1"/>
</dbReference>
<dbReference type="Gene3D" id="3.30.360.80">
    <property type="match status" value="1"/>
</dbReference>
<dbReference type="Gene3D" id="6.10.140.1500">
    <property type="match status" value="1"/>
</dbReference>
<dbReference type="Gene3D" id="6.10.140.2230">
    <property type="match status" value="1"/>
</dbReference>
<dbReference type="Gene3D" id="3.40.50.300">
    <property type="entry name" value="P-loop containing nucleotide triphosphate hydrolases"/>
    <property type="match status" value="1"/>
</dbReference>
<dbReference type="Gene3D" id="3.40.50.10810">
    <property type="entry name" value="Tandem AAA-ATPase domain"/>
    <property type="match status" value="1"/>
</dbReference>
<dbReference type="HAMAP" id="MF_01821">
    <property type="entry name" value="Helicase_RapA"/>
    <property type="match status" value="1"/>
</dbReference>
<dbReference type="InterPro" id="IPR014001">
    <property type="entry name" value="Helicase_ATP-bd"/>
</dbReference>
<dbReference type="InterPro" id="IPR001650">
    <property type="entry name" value="Helicase_C-like"/>
</dbReference>
<dbReference type="InterPro" id="IPR023949">
    <property type="entry name" value="Helicase_RapA"/>
</dbReference>
<dbReference type="InterPro" id="IPR027417">
    <property type="entry name" value="P-loop_NTPase"/>
</dbReference>
<dbReference type="InterPro" id="IPR022737">
    <property type="entry name" value="RapA_C"/>
</dbReference>
<dbReference type="InterPro" id="IPR038718">
    <property type="entry name" value="SNF2-like_sf"/>
</dbReference>
<dbReference type="InterPro" id="IPR049730">
    <property type="entry name" value="SNF2/RAD54-like_C"/>
</dbReference>
<dbReference type="InterPro" id="IPR000330">
    <property type="entry name" value="SNF2_N"/>
</dbReference>
<dbReference type="InterPro" id="IPR040765">
    <property type="entry name" value="Tudor_1_RapA"/>
</dbReference>
<dbReference type="InterPro" id="IPR040766">
    <property type="entry name" value="Tudor_2_RapA"/>
</dbReference>
<dbReference type="NCBIfam" id="NF003426">
    <property type="entry name" value="PRK04914.1"/>
    <property type="match status" value="1"/>
</dbReference>
<dbReference type="PANTHER" id="PTHR45766">
    <property type="entry name" value="DNA ANNEALING HELICASE AND ENDONUCLEASE ZRANB3 FAMILY MEMBER"/>
    <property type="match status" value="1"/>
</dbReference>
<dbReference type="PANTHER" id="PTHR45766:SF6">
    <property type="entry name" value="SWI_SNF-RELATED MATRIX-ASSOCIATED ACTIN-DEPENDENT REGULATOR OF CHROMATIN SUBFAMILY A-LIKE PROTEIN 1"/>
    <property type="match status" value="1"/>
</dbReference>
<dbReference type="Pfam" id="PF00271">
    <property type="entry name" value="Helicase_C"/>
    <property type="match status" value="1"/>
</dbReference>
<dbReference type="Pfam" id="PF12137">
    <property type="entry name" value="RapA_C"/>
    <property type="match status" value="1"/>
</dbReference>
<dbReference type="Pfam" id="PF00176">
    <property type="entry name" value="SNF2-rel_dom"/>
    <property type="match status" value="1"/>
</dbReference>
<dbReference type="Pfam" id="PF18339">
    <property type="entry name" value="Tudor_1_RapA"/>
    <property type="match status" value="1"/>
</dbReference>
<dbReference type="Pfam" id="PF18337">
    <property type="entry name" value="Tudor_RapA"/>
    <property type="match status" value="1"/>
</dbReference>
<dbReference type="SMART" id="SM00487">
    <property type="entry name" value="DEXDc"/>
    <property type="match status" value="1"/>
</dbReference>
<dbReference type="SMART" id="SM00490">
    <property type="entry name" value="HELICc"/>
    <property type="match status" value="1"/>
</dbReference>
<dbReference type="SUPFAM" id="SSF52540">
    <property type="entry name" value="P-loop containing nucleoside triphosphate hydrolases"/>
    <property type="match status" value="2"/>
</dbReference>
<dbReference type="PROSITE" id="PS51192">
    <property type="entry name" value="HELICASE_ATP_BIND_1"/>
    <property type="match status" value="1"/>
</dbReference>
<dbReference type="PROSITE" id="PS51194">
    <property type="entry name" value="HELICASE_CTER"/>
    <property type="match status" value="1"/>
</dbReference>
<protein>
    <recommendedName>
        <fullName evidence="1">RNA polymerase-associated protein RapA</fullName>
        <ecNumber evidence="1">3.6.4.-</ecNumber>
    </recommendedName>
    <alternativeName>
        <fullName evidence="1">ATP-dependent helicase HepA</fullName>
    </alternativeName>
</protein>
<sequence>MAFALGQRWISDTESDLGLGTVVALDARTVTLMFAASEENRVYASNDAPVTRVVFNVGDVVECQEGWSLKVEQVVEENGLYTYLGMREDTEETGVALREIFLSNQIRFNKPQDKMYAGQIDRMDNFVLRYRALKNQYEQHRSPMRGLCGMRAGLIPHQLYIAHEVGRRHAPRVLLADEVGLGKTIEAGMIIHQQVLLGRAERILIVVPETLQHQWLVEMMRRFNLHFSIFDEERCIEAFAESDNPFDTQQYVLCSLDFLRKSRKRFEQALEADWDLLVVDEAHHLEWSQDKPSRGYQVVEGLAERTPGVLLLTATPEQLGRESHFARLRLLDSDRFYDYAAFVEEEAQYAPVADAITALFSGVKLADEAKNQITELLSEQDVEPLFRIIESNADEESKAIARQELIDNLMDRHGTGRVLFRNTRAAIKGFPVRNVHLLPMPIPTQYTTSMRVSGMIGGKLAPEARAMKNLYPEEIFQEFEGEESSWWQFDCRVNWLLEKLKAQRSEKVLVIASRASTALQLEQALREREGIRATVFHEGMSILERDKAAAYFAQEEGGAQVLICSEIGSEGRNFQFANQLVMFDLPFNPDLLEQRIGRLDRIGQKRDIDIHVPYLQGTAQEVLARWFNEGLNAFAETCPTGRTVYDQVSDQLIEMLASGSNEALNDVIAESAKLNQALKADLEQGRDRLLEMHSNGGEKAQQIVAEIAAKDGDTNLVSFALSLFDTIGLNQDDKGENAIVVTPSEHMMVPSYPGLPYEGATITFDRDTALSREDMHFISWEHPMIQGGIDLLMSEGVGTCAVSLLKNKALPVGTLLLELIYAVDAQAPKRSGIGRFLPRTPIRLMMDARGNDLSAQVEFESFNRQLSPVNRHLASKLVSSVQNDIHRLIEAGDQLVVENVEAIRQQAQQEMQQSLNSELERLQALKAVNPNIRDEEIEAIDAQIKELNGYIAKAQFQLDSLRLIVVSHN</sequence>
<proteinExistence type="inferred from homology"/>
<feature type="chain" id="PRO_0000207191" description="RNA polymerase-associated protein RapA">
    <location>
        <begin position="1"/>
        <end position="969"/>
    </location>
</feature>
<feature type="domain" description="Helicase ATP-binding" evidence="1">
    <location>
        <begin position="164"/>
        <end position="334"/>
    </location>
</feature>
<feature type="domain" description="Helicase C-terminal" evidence="1">
    <location>
        <begin position="492"/>
        <end position="668"/>
    </location>
</feature>
<feature type="short sequence motif" description="DEAH box">
    <location>
        <begin position="280"/>
        <end position="283"/>
    </location>
</feature>
<feature type="binding site" evidence="1">
    <location>
        <begin position="177"/>
        <end position="184"/>
    </location>
    <ligand>
        <name>ATP</name>
        <dbReference type="ChEBI" id="CHEBI:30616"/>
    </ligand>
</feature>
<comment type="function">
    <text evidence="1">Transcription regulator that activates transcription by stimulating RNA polymerase (RNAP) recycling in case of stress conditions such as supercoiled DNA or high salt concentrations. Probably acts by releasing the RNAP, when it is trapped or immobilized on tightly supercoiled DNA. Does not activate transcription on linear DNA. Probably not involved in DNA repair.</text>
</comment>
<comment type="subunit">
    <text evidence="1">Interacts with the RNAP. Has a higher affinity for the core RNAP than for the holoenzyme. Its ATPase activity is stimulated by binding to RNAP.</text>
</comment>
<comment type="similarity">
    <text evidence="1">Belongs to the SNF2/RAD54 helicase family. RapA subfamily.</text>
</comment>
<keyword id="KW-0010">Activator</keyword>
<keyword id="KW-0067">ATP-binding</keyword>
<keyword id="KW-0238">DNA-binding</keyword>
<keyword id="KW-0347">Helicase</keyword>
<keyword id="KW-0378">Hydrolase</keyword>
<keyword id="KW-0547">Nucleotide-binding</keyword>
<keyword id="KW-0804">Transcription</keyword>
<keyword id="KW-0805">Transcription regulation</keyword>
<accession>Q7MHE6</accession>